<name>ACS1_KLULA</name>
<sequence length="707" mass="78420">MSPAVDTASTAKDPISVMKSNASAAAADQIKTHEYEHLTSVPIVQPLPITDRLSSEAAQKYKPNLPGGFEEYKSLHKESLENPAKFYHERAQLLNWFKPYDQVFIPDTEGKPTFENNAWFTNGQLNACYNLVDRHAFTQPNKVAILYEADEPGQGYSLTYAELLEQVCKVAQILQYSMNVKKGDTVAVYMPMIPQALITLLAITRIGAIHSVVFAGFSSNSLRDRINDAYSKTVITTDESKRGGKTIETKRIVDEALKDTPQVTNVLVFKRTHNENIKYIPGRDLDWDEEVKKYKSYTPCEPVDSEHPLFLLYTSGSTGAPKGVQHSTAGYLLQALLSMKYTFDIQNDDIFFTAGDIGWITGHTYCVYGPLLQGCTTLVFEGTPAYPNFSRYWEIVDKYQVTQFYVAPTALRLLKRAGDSFTEGFSLKSLRSLGSVGEPIAAEVWEWYSEKIGKNELPIVDTYWQTESGSHLVTPLAGGATPMKPGAAAFPFFGIDLAVLDPTTGIEQTGEHAEGVLAIKRPWPSFARTIWKNNDRFLDTYLKPYPGYYFTGDGVARDKDGFFWILGRVDDVVNVSGHRLSTAEIEAAIIEDDMVAECAVVGFNDELTGQAVAAFVVLKNKSSLTAASESELQDIKKHLIITVRKDIGPFAAPKLIVLVDDLPKTRSGKIMRRILRKILAGESDQLGDVSTLSNPGIVKHLIDSVKL</sequence>
<keyword id="KW-0067">ATP-binding</keyword>
<keyword id="KW-0256">Endoplasmic reticulum</keyword>
<keyword id="KW-0436">Ligase</keyword>
<keyword id="KW-0492">Microsome</keyword>
<keyword id="KW-0547">Nucleotide-binding</keyword>
<keyword id="KW-1185">Reference proteome</keyword>
<organism>
    <name type="scientific">Kluyveromyces lactis (strain ATCC 8585 / CBS 2359 / DSM 70799 / NBRC 1267 / NRRL Y-1140 / WM37)</name>
    <name type="common">Yeast</name>
    <name type="synonym">Candida sphaerica</name>
    <dbReference type="NCBI Taxonomy" id="284590"/>
    <lineage>
        <taxon>Eukaryota</taxon>
        <taxon>Fungi</taxon>
        <taxon>Dikarya</taxon>
        <taxon>Ascomycota</taxon>
        <taxon>Saccharomycotina</taxon>
        <taxon>Saccharomycetes</taxon>
        <taxon>Saccharomycetales</taxon>
        <taxon>Saccharomycetaceae</taxon>
        <taxon>Kluyveromyces</taxon>
    </lineage>
</organism>
<gene>
    <name type="primary">ACS1</name>
    <name type="ordered locus">KLLA0A03333g</name>
</gene>
<evidence type="ECO:0000250" key="1"/>
<evidence type="ECO:0000255" key="2"/>
<evidence type="ECO:0000305" key="3"/>
<comment type="function">
    <text>May be required for assimilation of ethanol and acetate.</text>
</comment>
<comment type="catalytic activity">
    <reaction>
        <text>acetate + ATP + CoA = acetyl-CoA + AMP + diphosphate</text>
        <dbReference type="Rhea" id="RHEA:23176"/>
        <dbReference type="ChEBI" id="CHEBI:30089"/>
        <dbReference type="ChEBI" id="CHEBI:30616"/>
        <dbReference type="ChEBI" id="CHEBI:33019"/>
        <dbReference type="ChEBI" id="CHEBI:57287"/>
        <dbReference type="ChEBI" id="CHEBI:57288"/>
        <dbReference type="ChEBI" id="CHEBI:456215"/>
        <dbReference type="EC" id="6.2.1.1"/>
    </reaction>
</comment>
<comment type="subcellular location">
    <subcellularLocation>
        <location evidence="3">Microsome</location>
    </subcellularLocation>
    <subcellularLocation>
        <location evidence="3">Endoplasmic reticulum</location>
    </subcellularLocation>
</comment>
<comment type="similarity">
    <text evidence="3">Belongs to the ATP-dependent AMP-binding enzyme family.</text>
</comment>
<comment type="sequence caution" evidence="3">
    <conflict type="frameshift">
        <sequence resource="EMBL-CDS" id="AAC16713"/>
    </conflict>
</comment>
<dbReference type="EC" id="6.2.1.1"/>
<dbReference type="EMBL" id="AF061265">
    <property type="protein sequence ID" value="AAC16713.1"/>
    <property type="status" value="ALT_FRAME"/>
    <property type="molecule type" value="Genomic_DNA"/>
</dbReference>
<dbReference type="EMBL" id="CR382121">
    <property type="protein sequence ID" value="CAH02734.1"/>
    <property type="molecule type" value="Genomic_DNA"/>
</dbReference>
<dbReference type="RefSeq" id="XP_451146.1">
    <property type="nucleotide sequence ID" value="XM_451146.1"/>
</dbReference>
<dbReference type="SMR" id="O60011"/>
<dbReference type="FunCoup" id="O60011">
    <property type="interactions" value="523"/>
</dbReference>
<dbReference type="STRING" id="284590.O60011"/>
<dbReference type="PaxDb" id="284590-O60011"/>
<dbReference type="KEGG" id="kla:KLLA0_A03333g"/>
<dbReference type="eggNOG" id="KOG1175">
    <property type="taxonomic scope" value="Eukaryota"/>
</dbReference>
<dbReference type="HOGENOM" id="CLU_000022_3_6_1"/>
<dbReference type="InParanoid" id="O60011"/>
<dbReference type="OMA" id="AIKASWP"/>
<dbReference type="Proteomes" id="UP000000598">
    <property type="component" value="Chromosome A"/>
</dbReference>
<dbReference type="GO" id="GO:0005829">
    <property type="term" value="C:cytosol"/>
    <property type="evidence" value="ECO:0007669"/>
    <property type="project" value="TreeGrafter"/>
</dbReference>
<dbReference type="GO" id="GO:0005783">
    <property type="term" value="C:endoplasmic reticulum"/>
    <property type="evidence" value="ECO:0007669"/>
    <property type="project" value="UniProtKB-SubCell"/>
</dbReference>
<dbReference type="GO" id="GO:0003987">
    <property type="term" value="F:acetate-CoA ligase activity"/>
    <property type="evidence" value="ECO:0007669"/>
    <property type="project" value="UniProtKB-EC"/>
</dbReference>
<dbReference type="GO" id="GO:0016208">
    <property type="term" value="F:AMP binding"/>
    <property type="evidence" value="ECO:0007669"/>
    <property type="project" value="InterPro"/>
</dbReference>
<dbReference type="GO" id="GO:0005524">
    <property type="term" value="F:ATP binding"/>
    <property type="evidence" value="ECO:0007669"/>
    <property type="project" value="UniProtKB-KW"/>
</dbReference>
<dbReference type="GO" id="GO:0019427">
    <property type="term" value="P:acetyl-CoA biosynthetic process from acetate"/>
    <property type="evidence" value="ECO:0007669"/>
    <property type="project" value="InterPro"/>
</dbReference>
<dbReference type="CDD" id="cd05966">
    <property type="entry name" value="ACS"/>
    <property type="match status" value="1"/>
</dbReference>
<dbReference type="FunFam" id="3.30.300.30:FF:000004">
    <property type="entry name" value="Acetyl-coenzyme A synthetase"/>
    <property type="match status" value="1"/>
</dbReference>
<dbReference type="FunFam" id="3.40.50.12780:FF:000001">
    <property type="entry name" value="Acetyl-coenzyme A synthetase"/>
    <property type="match status" value="1"/>
</dbReference>
<dbReference type="Gene3D" id="3.30.300.30">
    <property type="match status" value="1"/>
</dbReference>
<dbReference type="Gene3D" id="3.40.50.12780">
    <property type="entry name" value="N-terminal domain of ligase-like"/>
    <property type="match status" value="1"/>
</dbReference>
<dbReference type="InterPro" id="IPR011904">
    <property type="entry name" value="Ac_CoA_lig"/>
</dbReference>
<dbReference type="InterPro" id="IPR032387">
    <property type="entry name" value="ACAS_N"/>
</dbReference>
<dbReference type="InterPro" id="IPR025110">
    <property type="entry name" value="AMP-bd_C"/>
</dbReference>
<dbReference type="InterPro" id="IPR045851">
    <property type="entry name" value="AMP-bd_C_sf"/>
</dbReference>
<dbReference type="InterPro" id="IPR020845">
    <property type="entry name" value="AMP-binding_CS"/>
</dbReference>
<dbReference type="InterPro" id="IPR000873">
    <property type="entry name" value="AMP-dep_synth/lig_dom"/>
</dbReference>
<dbReference type="InterPro" id="IPR042099">
    <property type="entry name" value="ANL_N_sf"/>
</dbReference>
<dbReference type="NCBIfam" id="TIGR02188">
    <property type="entry name" value="Ac_CoA_lig_AcsA"/>
    <property type="match status" value="1"/>
</dbReference>
<dbReference type="NCBIfam" id="NF001208">
    <property type="entry name" value="PRK00174.1"/>
    <property type="match status" value="1"/>
</dbReference>
<dbReference type="PANTHER" id="PTHR24095">
    <property type="entry name" value="ACETYL-COENZYME A SYNTHETASE"/>
    <property type="match status" value="1"/>
</dbReference>
<dbReference type="PANTHER" id="PTHR24095:SF14">
    <property type="entry name" value="ACETYL-COENZYME A SYNTHETASE 1"/>
    <property type="match status" value="1"/>
</dbReference>
<dbReference type="Pfam" id="PF16177">
    <property type="entry name" value="ACAS_N"/>
    <property type="match status" value="1"/>
</dbReference>
<dbReference type="Pfam" id="PF00501">
    <property type="entry name" value="AMP-binding"/>
    <property type="match status" value="1"/>
</dbReference>
<dbReference type="Pfam" id="PF13193">
    <property type="entry name" value="AMP-binding_C"/>
    <property type="match status" value="1"/>
</dbReference>
<dbReference type="SUPFAM" id="SSF56801">
    <property type="entry name" value="Acetyl-CoA synthetase-like"/>
    <property type="match status" value="1"/>
</dbReference>
<dbReference type="PROSITE" id="PS00455">
    <property type="entry name" value="AMP_BINDING"/>
    <property type="match status" value="1"/>
</dbReference>
<proteinExistence type="inferred from homology"/>
<reference key="1">
    <citation type="journal article" date="2003" name="Yeast">
        <title>The acetyl co-enzyme A synthetase genes of Kluyveromyces lactis.</title>
        <authorList>
            <person name="Zeeman A.-M."/>
            <person name="Steensma H.Y."/>
        </authorList>
    </citation>
    <scope>NUCLEOTIDE SEQUENCE [GENOMIC DNA]</scope>
    <source>
        <strain>ATCC 8585 / CBS 2359 / DSM 70799 / NBRC 1267 / NRRL Y-1140 / WM37</strain>
    </source>
</reference>
<reference key="2">
    <citation type="journal article" date="2004" name="Nature">
        <title>Genome evolution in yeasts.</title>
        <authorList>
            <person name="Dujon B."/>
            <person name="Sherman D."/>
            <person name="Fischer G."/>
            <person name="Durrens P."/>
            <person name="Casaregola S."/>
            <person name="Lafontaine I."/>
            <person name="de Montigny J."/>
            <person name="Marck C."/>
            <person name="Neuveglise C."/>
            <person name="Talla E."/>
            <person name="Goffard N."/>
            <person name="Frangeul L."/>
            <person name="Aigle M."/>
            <person name="Anthouard V."/>
            <person name="Babour A."/>
            <person name="Barbe V."/>
            <person name="Barnay S."/>
            <person name="Blanchin S."/>
            <person name="Beckerich J.-M."/>
            <person name="Beyne E."/>
            <person name="Bleykasten C."/>
            <person name="Boisrame A."/>
            <person name="Boyer J."/>
            <person name="Cattolico L."/>
            <person name="Confanioleri F."/>
            <person name="de Daruvar A."/>
            <person name="Despons L."/>
            <person name="Fabre E."/>
            <person name="Fairhead C."/>
            <person name="Ferry-Dumazet H."/>
            <person name="Groppi A."/>
            <person name="Hantraye F."/>
            <person name="Hennequin C."/>
            <person name="Jauniaux N."/>
            <person name="Joyet P."/>
            <person name="Kachouri R."/>
            <person name="Kerrest A."/>
            <person name="Koszul R."/>
            <person name="Lemaire M."/>
            <person name="Lesur I."/>
            <person name="Ma L."/>
            <person name="Muller H."/>
            <person name="Nicaud J.-M."/>
            <person name="Nikolski M."/>
            <person name="Oztas S."/>
            <person name="Ozier-Kalogeropoulos O."/>
            <person name="Pellenz S."/>
            <person name="Potier S."/>
            <person name="Richard G.-F."/>
            <person name="Straub M.-L."/>
            <person name="Suleau A."/>
            <person name="Swennen D."/>
            <person name="Tekaia F."/>
            <person name="Wesolowski-Louvel M."/>
            <person name="Westhof E."/>
            <person name="Wirth B."/>
            <person name="Zeniou-Meyer M."/>
            <person name="Zivanovic Y."/>
            <person name="Bolotin-Fukuhara M."/>
            <person name="Thierry A."/>
            <person name="Bouchier C."/>
            <person name="Caudron B."/>
            <person name="Scarpelli C."/>
            <person name="Gaillardin C."/>
            <person name="Weissenbach J."/>
            <person name="Wincker P."/>
            <person name="Souciet J.-L."/>
        </authorList>
    </citation>
    <scope>NUCLEOTIDE SEQUENCE [LARGE SCALE GENOMIC DNA]</scope>
    <source>
        <strain>ATCC 8585 / CBS 2359 / DSM 70799 / NBRC 1267 / NRRL Y-1140 / WM37</strain>
    </source>
</reference>
<feature type="chain" id="PRO_0000208414" description="Acetyl-coenzyme A synthetase 1">
    <location>
        <begin position="1"/>
        <end position="707"/>
    </location>
</feature>
<feature type="short sequence motif" description="Microbody targeting signal" evidence="2">
    <location>
        <begin position="705"/>
        <end position="707"/>
    </location>
</feature>
<feature type="binding site" evidence="1">
    <location>
        <begin position="242"/>
        <end position="245"/>
    </location>
    <ligand>
        <name>CoA</name>
        <dbReference type="ChEBI" id="CHEBI:57287"/>
    </ligand>
</feature>
<feature type="binding site" evidence="1">
    <location>
        <position position="361"/>
    </location>
    <ligand>
        <name>CoA</name>
        <dbReference type="ChEBI" id="CHEBI:57287"/>
    </ligand>
</feature>
<feature type="binding site" evidence="1">
    <location>
        <begin position="437"/>
        <end position="439"/>
    </location>
    <ligand>
        <name>ATP</name>
        <dbReference type="ChEBI" id="CHEBI:30616"/>
    </ligand>
</feature>
<feature type="binding site" evidence="1">
    <location>
        <begin position="461"/>
        <end position="466"/>
    </location>
    <ligand>
        <name>ATP</name>
        <dbReference type="ChEBI" id="CHEBI:30616"/>
    </ligand>
</feature>
<feature type="binding site" evidence="1">
    <location>
        <position position="553"/>
    </location>
    <ligand>
        <name>ATP</name>
        <dbReference type="ChEBI" id="CHEBI:30616"/>
    </ligand>
</feature>
<feature type="binding site" evidence="1">
    <location>
        <position position="568"/>
    </location>
    <ligand>
        <name>ATP</name>
        <dbReference type="ChEBI" id="CHEBI:30616"/>
    </ligand>
</feature>
<feature type="binding site" evidence="1">
    <location>
        <position position="576"/>
    </location>
    <ligand>
        <name>CoA</name>
        <dbReference type="ChEBI" id="CHEBI:57287"/>
    </ligand>
</feature>
<feature type="binding site" evidence="1">
    <location>
        <position position="579"/>
    </location>
    <ligand>
        <name>ATP</name>
        <dbReference type="ChEBI" id="CHEBI:30616"/>
    </ligand>
</feature>
<feature type="binding site" evidence="1">
    <location>
        <position position="644"/>
    </location>
    <ligand>
        <name>CoA</name>
        <dbReference type="ChEBI" id="CHEBI:57287"/>
    </ligand>
</feature>
<feature type="sequence conflict" description="In Ref. 1; AAC16713." evidence="3" ref="1">
    <original>GDVSTLSNPGIVKHLIDSVKL</original>
    <variation>ATSPHYPTLVSLST</variation>
    <location>
        <begin position="687"/>
        <end position="707"/>
    </location>
</feature>
<accession>O60011</accession>
<accession>Q6CY43</accession>
<protein>
    <recommendedName>
        <fullName>Acetyl-coenzyme A synthetase 1</fullName>
        <ecNumber>6.2.1.1</ecNumber>
    </recommendedName>
    <alternativeName>
        <fullName>Acetate--CoA ligase 1</fullName>
    </alternativeName>
    <alternativeName>
        <fullName>Acyl-activating enzyme 1</fullName>
    </alternativeName>
</protein>